<proteinExistence type="inferred from homology"/>
<reference key="1">
    <citation type="journal article" date="2007" name="PLoS ONE">
        <title>Molecular correlates of host specialization in Staphylococcus aureus.</title>
        <authorList>
            <person name="Herron-Olson L."/>
            <person name="Fitzgerald J.R."/>
            <person name="Musser J.M."/>
            <person name="Kapur V."/>
        </authorList>
    </citation>
    <scope>NUCLEOTIDE SEQUENCE [LARGE SCALE GENOMIC DNA]</scope>
    <source>
        <strain>bovine RF122 / ET3-1</strain>
    </source>
</reference>
<dbReference type="EC" id="2.7.7.3" evidence="1"/>
<dbReference type="EMBL" id="AJ938182">
    <property type="protein sequence ID" value="CAI80677.1"/>
    <property type="molecule type" value="Genomic_DNA"/>
</dbReference>
<dbReference type="RefSeq" id="WP_000401377.1">
    <property type="nucleotide sequence ID" value="NC_007622.1"/>
</dbReference>
<dbReference type="SMR" id="Q2YXA0"/>
<dbReference type="GeneID" id="98345441"/>
<dbReference type="KEGG" id="sab:SAB0989"/>
<dbReference type="HOGENOM" id="CLU_100149_0_1_9"/>
<dbReference type="UniPathway" id="UPA00241">
    <property type="reaction ID" value="UER00355"/>
</dbReference>
<dbReference type="GO" id="GO:0005737">
    <property type="term" value="C:cytoplasm"/>
    <property type="evidence" value="ECO:0007669"/>
    <property type="project" value="UniProtKB-SubCell"/>
</dbReference>
<dbReference type="GO" id="GO:0005524">
    <property type="term" value="F:ATP binding"/>
    <property type="evidence" value="ECO:0007669"/>
    <property type="project" value="UniProtKB-KW"/>
</dbReference>
<dbReference type="GO" id="GO:0004595">
    <property type="term" value="F:pantetheine-phosphate adenylyltransferase activity"/>
    <property type="evidence" value="ECO:0007669"/>
    <property type="project" value="UniProtKB-UniRule"/>
</dbReference>
<dbReference type="GO" id="GO:0015937">
    <property type="term" value="P:coenzyme A biosynthetic process"/>
    <property type="evidence" value="ECO:0007669"/>
    <property type="project" value="UniProtKB-UniRule"/>
</dbReference>
<dbReference type="CDD" id="cd02163">
    <property type="entry name" value="PPAT"/>
    <property type="match status" value="1"/>
</dbReference>
<dbReference type="Gene3D" id="3.40.50.620">
    <property type="entry name" value="HUPs"/>
    <property type="match status" value="1"/>
</dbReference>
<dbReference type="HAMAP" id="MF_00151">
    <property type="entry name" value="PPAT_bact"/>
    <property type="match status" value="1"/>
</dbReference>
<dbReference type="InterPro" id="IPR004821">
    <property type="entry name" value="Cyt_trans-like"/>
</dbReference>
<dbReference type="InterPro" id="IPR001980">
    <property type="entry name" value="PPAT"/>
</dbReference>
<dbReference type="InterPro" id="IPR014729">
    <property type="entry name" value="Rossmann-like_a/b/a_fold"/>
</dbReference>
<dbReference type="NCBIfam" id="TIGR01510">
    <property type="entry name" value="coaD_prev_kdtB"/>
    <property type="match status" value="1"/>
</dbReference>
<dbReference type="NCBIfam" id="TIGR00125">
    <property type="entry name" value="cyt_tran_rel"/>
    <property type="match status" value="1"/>
</dbReference>
<dbReference type="PANTHER" id="PTHR21342">
    <property type="entry name" value="PHOSPHOPANTETHEINE ADENYLYLTRANSFERASE"/>
    <property type="match status" value="1"/>
</dbReference>
<dbReference type="PANTHER" id="PTHR21342:SF1">
    <property type="entry name" value="PHOSPHOPANTETHEINE ADENYLYLTRANSFERASE"/>
    <property type="match status" value="1"/>
</dbReference>
<dbReference type="Pfam" id="PF01467">
    <property type="entry name" value="CTP_transf_like"/>
    <property type="match status" value="1"/>
</dbReference>
<dbReference type="PRINTS" id="PR01020">
    <property type="entry name" value="LPSBIOSNTHSS"/>
</dbReference>
<dbReference type="SUPFAM" id="SSF52374">
    <property type="entry name" value="Nucleotidylyl transferase"/>
    <property type="match status" value="1"/>
</dbReference>
<protein>
    <recommendedName>
        <fullName evidence="1">Phosphopantetheine adenylyltransferase</fullName>
        <ecNumber evidence="1">2.7.7.3</ecNumber>
    </recommendedName>
    <alternativeName>
        <fullName evidence="1">Dephospho-CoA pyrophosphorylase</fullName>
    </alternativeName>
    <alternativeName>
        <fullName evidence="1">Pantetheine-phosphate adenylyltransferase</fullName>
        <shortName evidence="1">PPAT</shortName>
    </alternativeName>
</protein>
<feature type="chain" id="PRO_1000011246" description="Phosphopantetheine adenylyltransferase">
    <location>
        <begin position="1"/>
        <end position="160"/>
    </location>
</feature>
<feature type="binding site" evidence="1">
    <location>
        <begin position="11"/>
        <end position="12"/>
    </location>
    <ligand>
        <name>ATP</name>
        <dbReference type="ChEBI" id="CHEBI:30616"/>
    </ligand>
</feature>
<feature type="binding site" evidence="1">
    <location>
        <position position="11"/>
    </location>
    <ligand>
        <name>substrate</name>
    </ligand>
</feature>
<feature type="binding site" evidence="1">
    <location>
        <position position="19"/>
    </location>
    <ligand>
        <name>ATP</name>
        <dbReference type="ChEBI" id="CHEBI:30616"/>
    </ligand>
</feature>
<feature type="binding site" evidence="1">
    <location>
        <position position="43"/>
    </location>
    <ligand>
        <name>substrate</name>
    </ligand>
</feature>
<feature type="binding site" evidence="1">
    <location>
        <position position="75"/>
    </location>
    <ligand>
        <name>substrate</name>
    </ligand>
</feature>
<feature type="binding site" evidence="1">
    <location>
        <position position="89"/>
    </location>
    <ligand>
        <name>substrate</name>
    </ligand>
</feature>
<feature type="binding site" evidence="1">
    <location>
        <begin position="90"/>
        <end position="92"/>
    </location>
    <ligand>
        <name>ATP</name>
        <dbReference type="ChEBI" id="CHEBI:30616"/>
    </ligand>
</feature>
<feature type="binding site" evidence="1">
    <location>
        <position position="100"/>
    </location>
    <ligand>
        <name>ATP</name>
        <dbReference type="ChEBI" id="CHEBI:30616"/>
    </ligand>
</feature>
<feature type="binding site" evidence="1">
    <location>
        <begin position="125"/>
        <end position="131"/>
    </location>
    <ligand>
        <name>ATP</name>
        <dbReference type="ChEBI" id="CHEBI:30616"/>
    </ligand>
</feature>
<feature type="site" description="Transition state stabilizer" evidence="1">
    <location>
        <position position="19"/>
    </location>
</feature>
<accession>Q2YXA0</accession>
<keyword id="KW-0067">ATP-binding</keyword>
<keyword id="KW-0173">Coenzyme A biosynthesis</keyword>
<keyword id="KW-0963">Cytoplasm</keyword>
<keyword id="KW-0460">Magnesium</keyword>
<keyword id="KW-0547">Nucleotide-binding</keyword>
<keyword id="KW-0548">Nucleotidyltransferase</keyword>
<keyword id="KW-0808">Transferase</keyword>
<name>COAD_STAAB</name>
<sequence length="160" mass="18371">MEHTIAVIPGSFDPITYGHLDIIERSTDRFDEIHVCVLKNSKKEGTFSLEERMDLIEQSVKHLPNVKVHQFSGLLVDYCEQVGAKTIIRGLRAVSDFEYELRLTSMNKKLNNEIETLYMMSSTNYSFISSSIVKEVAAYRADISEFVPPYVEKALKKKFK</sequence>
<evidence type="ECO:0000255" key="1">
    <source>
        <dbReference type="HAMAP-Rule" id="MF_00151"/>
    </source>
</evidence>
<comment type="function">
    <text evidence="1">Reversibly transfers an adenylyl group from ATP to 4'-phosphopantetheine, yielding dephospho-CoA (dPCoA) and pyrophosphate.</text>
</comment>
<comment type="catalytic activity">
    <reaction evidence="1">
        <text>(R)-4'-phosphopantetheine + ATP + H(+) = 3'-dephospho-CoA + diphosphate</text>
        <dbReference type="Rhea" id="RHEA:19801"/>
        <dbReference type="ChEBI" id="CHEBI:15378"/>
        <dbReference type="ChEBI" id="CHEBI:30616"/>
        <dbReference type="ChEBI" id="CHEBI:33019"/>
        <dbReference type="ChEBI" id="CHEBI:57328"/>
        <dbReference type="ChEBI" id="CHEBI:61723"/>
        <dbReference type="EC" id="2.7.7.3"/>
    </reaction>
</comment>
<comment type="cofactor">
    <cofactor evidence="1">
        <name>Mg(2+)</name>
        <dbReference type="ChEBI" id="CHEBI:18420"/>
    </cofactor>
</comment>
<comment type="pathway">
    <text evidence="1">Cofactor biosynthesis; coenzyme A biosynthesis; CoA from (R)-pantothenate: step 4/5.</text>
</comment>
<comment type="subunit">
    <text evidence="1">Homohexamer.</text>
</comment>
<comment type="subcellular location">
    <subcellularLocation>
        <location evidence="1">Cytoplasm</location>
    </subcellularLocation>
</comment>
<comment type="similarity">
    <text evidence="1">Belongs to the bacterial CoaD family.</text>
</comment>
<organism>
    <name type="scientific">Staphylococcus aureus (strain bovine RF122 / ET3-1)</name>
    <dbReference type="NCBI Taxonomy" id="273036"/>
    <lineage>
        <taxon>Bacteria</taxon>
        <taxon>Bacillati</taxon>
        <taxon>Bacillota</taxon>
        <taxon>Bacilli</taxon>
        <taxon>Bacillales</taxon>
        <taxon>Staphylococcaceae</taxon>
        <taxon>Staphylococcus</taxon>
    </lineage>
</organism>
<gene>
    <name evidence="1" type="primary">coaD</name>
    <name type="ordered locus">SAB0989</name>
</gene>